<comment type="function">
    <text evidence="1">NDH shuttles electrons from NAD(P)H:plastoquinone, via FMN and iron-sulfur (Fe-S) centers, to quinones in the photosynthetic chain and possibly in a chloroplast respiratory chain. The immediate electron acceptor for the enzyme in this species is believed to be plastoquinone. Couples the redox reaction to proton translocation, and thus conserves the redox energy in a proton gradient.</text>
</comment>
<comment type="catalytic activity">
    <reaction evidence="1">
        <text>a plastoquinone + NADH + (n+1) H(+)(in) = a plastoquinol + NAD(+) + n H(+)(out)</text>
        <dbReference type="Rhea" id="RHEA:42608"/>
        <dbReference type="Rhea" id="RHEA-COMP:9561"/>
        <dbReference type="Rhea" id="RHEA-COMP:9562"/>
        <dbReference type="ChEBI" id="CHEBI:15378"/>
        <dbReference type="ChEBI" id="CHEBI:17757"/>
        <dbReference type="ChEBI" id="CHEBI:57540"/>
        <dbReference type="ChEBI" id="CHEBI:57945"/>
        <dbReference type="ChEBI" id="CHEBI:62192"/>
    </reaction>
</comment>
<comment type="catalytic activity">
    <reaction evidence="1">
        <text>a plastoquinone + NADPH + (n+1) H(+)(in) = a plastoquinol + NADP(+) + n H(+)(out)</text>
        <dbReference type="Rhea" id="RHEA:42612"/>
        <dbReference type="Rhea" id="RHEA-COMP:9561"/>
        <dbReference type="Rhea" id="RHEA-COMP:9562"/>
        <dbReference type="ChEBI" id="CHEBI:15378"/>
        <dbReference type="ChEBI" id="CHEBI:17757"/>
        <dbReference type="ChEBI" id="CHEBI:57783"/>
        <dbReference type="ChEBI" id="CHEBI:58349"/>
        <dbReference type="ChEBI" id="CHEBI:62192"/>
    </reaction>
</comment>
<comment type="subunit">
    <text evidence="1">NDH is composed of at least 16 different subunits, 5 of which are encoded in the nucleus.</text>
</comment>
<comment type="subcellular location">
    <subcellularLocation>
        <location evidence="1">Plastid</location>
        <location evidence="1">Chloroplast thylakoid membrane</location>
        <topology evidence="1">Multi-pass membrane protein</topology>
    </subcellularLocation>
</comment>
<comment type="similarity">
    <text evidence="1">Belongs to the complex I subunit 1 family.</text>
</comment>
<sequence length="363" mass="40044">MSSFDLKQRAVEWFSNLGIPTQIATFVWICVPIVVLILGITLGVLVLVWLERKISAAVQQRIGPEYAGPLGTIQALADGLKLILKEDIIPSRADKWLFALGPAIVVIPVLLSFLVIPFNHQLIVADISIGMFFWIAVSSVAPVGLLVAGYGSNNKYAFLGGLRAAAQSISYEIPLALCVLSVVLMSNSLSTIEIVEQQSRFGILGWNIWRQPVGFIAFVISALAECERLPFDLPEAEEELVAGYQTEYSGIKFGLFYVASYLNLFASSLFVTILYLGGWSPNISFEQVFNWEQGEQLFAVLDGLIAFAITLSKAYLFLFASILTRWTLPRVRMDQLLDLGWKFLLPVALGNLLLTASFELALL</sequence>
<reference key="1">
    <citation type="journal article" date="2005" name="BMC Biol.">
        <title>The complete chloroplast DNA sequences of the charophycean green algae Staurastrum and Zygnema reveal that the chloroplast genome underwent extensive changes during the evolution of the Zygnematales.</title>
        <authorList>
            <person name="Turmel M."/>
            <person name="Otis C."/>
            <person name="Lemieux C."/>
        </authorList>
    </citation>
    <scope>NUCLEOTIDE SEQUENCE [LARGE SCALE GENOMIC DNA]</scope>
</reference>
<name>NU1C_ZYGCR</name>
<dbReference type="EC" id="7.1.1.-" evidence="1"/>
<dbReference type="EMBL" id="AY958086">
    <property type="protein sequence ID" value="AAX45812.1"/>
    <property type="molecule type" value="Genomic_DNA"/>
</dbReference>
<dbReference type="RefSeq" id="YP_636524.1">
    <property type="nucleotide sequence ID" value="NC_008117.1"/>
</dbReference>
<dbReference type="SMR" id="Q32RK2"/>
<dbReference type="GeneID" id="4108132"/>
<dbReference type="GO" id="GO:0009535">
    <property type="term" value="C:chloroplast thylakoid membrane"/>
    <property type="evidence" value="ECO:0007669"/>
    <property type="project" value="UniProtKB-SubCell"/>
</dbReference>
<dbReference type="GO" id="GO:0003954">
    <property type="term" value="F:NADH dehydrogenase activity"/>
    <property type="evidence" value="ECO:0007669"/>
    <property type="project" value="TreeGrafter"/>
</dbReference>
<dbReference type="GO" id="GO:0016655">
    <property type="term" value="F:oxidoreductase activity, acting on NAD(P)H, quinone or similar compound as acceptor"/>
    <property type="evidence" value="ECO:0007669"/>
    <property type="project" value="UniProtKB-UniRule"/>
</dbReference>
<dbReference type="GO" id="GO:0048038">
    <property type="term" value="F:quinone binding"/>
    <property type="evidence" value="ECO:0007669"/>
    <property type="project" value="UniProtKB-KW"/>
</dbReference>
<dbReference type="GO" id="GO:0009060">
    <property type="term" value="P:aerobic respiration"/>
    <property type="evidence" value="ECO:0007669"/>
    <property type="project" value="TreeGrafter"/>
</dbReference>
<dbReference type="GO" id="GO:0019684">
    <property type="term" value="P:photosynthesis, light reaction"/>
    <property type="evidence" value="ECO:0007669"/>
    <property type="project" value="UniProtKB-UniRule"/>
</dbReference>
<dbReference type="HAMAP" id="MF_01350">
    <property type="entry name" value="NDH1_NuoH"/>
    <property type="match status" value="1"/>
</dbReference>
<dbReference type="InterPro" id="IPR001694">
    <property type="entry name" value="NADH_UbQ_OxRdtase_su1/FPO"/>
</dbReference>
<dbReference type="InterPro" id="IPR018086">
    <property type="entry name" value="NADH_UbQ_OxRdtase_su1_CS"/>
</dbReference>
<dbReference type="NCBIfam" id="NF004741">
    <property type="entry name" value="PRK06076.1-2"/>
    <property type="match status" value="1"/>
</dbReference>
<dbReference type="NCBIfam" id="NF004744">
    <property type="entry name" value="PRK06076.1-5"/>
    <property type="match status" value="1"/>
</dbReference>
<dbReference type="PANTHER" id="PTHR11432">
    <property type="entry name" value="NADH DEHYDROGENASE SUBUNIT 1"/>
    <property type="match status" value="1"/>
</dbReference>
<dbReference type="PANTHER" id="PTHR11432:SF3">
    <property type="entry name" value="NADH-UBIQUINONE OXIDOREDUCTASE CHAIN 1"/>
    <property type="match status" value="1"/>
</dbReference>
<dbReference type="Pfam" id="PF00146">
    <property type="entry name" value="NADHdh"/>
    <property type="match status" value="1"/>
</dbReference>
<dbReference type="PROSITE" id="PS00667">
    <property type="entry name" value="COMPLEX1_ND1_1"/>
    <property type="match status" value="1"/>
</dbReference>
<dbReference type="PROSITE" id="PS00668">
    <property type="entry name" value="COMPLEX1_ND1_2"/>
    <property type="match status" value="1"/>
</dbReference>
<keyword id="KW-0150">Chloroplast</keyword>
<keyword id="KW-0472">Membrane</keyword>
<keyword id="KW-0520">NAD</keyword>
<keyword id="KW-0521">NADP</keyword>
<keyword id="KW-0934">Plastid</keyword>
<keyword id="KW-0618">Plastoquinone</keyword>
<keyword id="KW-0874">Quinone</keyword>
<keyword id="KW-0793">Thylakoid</keyword>
<keyword id="KW-1278">Translocase</keyword>
<keyword id="KW-0812">Transmembrane</keyword>
<keyword id="KW-1133">Transmembrane helix</keyword>
<proteinExistence type="inferred from homology"/>
<accession>Q32RK2</accession>
<evidence type="ECO:0000255" key="1">
    <source>
        <dbReference type="HAMAP-Rule" id="MF_01350"/>
    </source>
</evidence>
<organism>
    <name type="scientific">Zygnema circumcarinatum</name>
    <name type="common">Green alga</name>
    <dbReference type="NCBI Taxonomy" id="35869"/>
    <lineage>
        <taxon>Eukaryota</taxon>
        <taxon>Viridiplantae</taxon>
        <taxon>Streptophyta</taxon>
        <taxon>Zygnematophyceae</taxon>
        <taxon>Zygnematophycidae</taxon>
        <taxon>Zygnematales</taxon>
        <taxon>Zygnemataceae</taxon>
        <taxon>Zygnema</taxon>
    </lineage>
</organism>
<gene>
    <name evidence="1" type="primary">ndhA</name>
</gene>
<protein>
    <recommendedName>
        <fullName evidence="1">NAD(P)H-quinone oxidoreductase subunit 1, chloroplastic</fullName>
        <ecNumber evidence="1">7.1.1.-</ecNumber>
    </recommendedName>
    <alternativeName>
        <fullName evidence="1">NAD(P)H dehydrogenase subunit 1</fullName>
        <shortName evidence="1">NDH subunit 1</shortName>
    </alternativeName>
    <alternativeName>
        <fullName evidence="1">NADH-plastoquinone oxidoreductase subunit 1</fullName>
    </alternativeName>
</protein>
<geneLocation type="chloroplast"/>
<feature type="chain" id="PRO_0000240034" description="NAD(P)H-quinone oxidoreductase subunit 1, chloroplastic">
    <location>
        <begin position="1"/>
        <end position="363"/>
    </location>
</feature>
<feature type="transmembrane region" description="Helical" evidence="1">
    <location>
        <begin position="26"/>
        <end position="46"/>
    </location>
</feature>
<feature type="transmembrane region" description="Helical" evidence="1">
    <location>
        <begin position="96"/>
        <end position="116"/>
    </location>
</feature>
<feature type="transmembrane region" description="Helical" evidence="1">
    <location>
        <begin position="127"/>
        <end position="147"/>
    </location>
</feature>
<feature type="transmembrane region" description="Helical" evidence="1">
    <location>
        <begin position="175"/>
        <end position="195"/>
    </location>
</feature>
<feature type="transmembrane region" description="Helical" evidence="1">
    <location>
        <begin position="203"/>
        <end position="223"/>
    </location>
</feature>
<feature type="transmembrane region" description="Helical" evidence="1">
    <location>
        <begin position="253"/>
        <end position="273"/>
    </location>
</feature>
<feature type="transmembrane region" description="Helical" evidence="1">
    <location>
        <begin position="303"/>
        <end position="323"/>
    </location>
</feature>
<feature type="transmembrane region" description="Helical" evidence="1">
    <location>
        <begin position="343"/>
        <end position="363"/>
    </location>
</feature>